<accession>B9DTU7</accession>
<name>UPP_STRU0</name>
<comment type="function">
    <text evidence="1">Catalyzes the conversion of uracil and 5-phospho-alpha-D-ribose 1-diphosphate (PRPP) to UMP and diphosphate.</text>
</comment>
<comment type="catalytic activity">
    <reaction evidence="1">
        <text>UMP + diphosphate = 5-phospho-alpha-D-ribose 1-diphosphate + uracil</text>
        <dbReference type="Rhea" id="RHEA:13017"/>
        <dbReference type="ChEBI" id="CHEBI:17568"/>
        <dbReference type="ChEBI" id="CHEBI:33019"/>
        <dbReference type="ChEBI" id="CHEBI:57865"/>
        <dbReference type="ChEBI" id="CHEBI:58017"/>
        <dbReference type="EC" id="2.4.2.9"/>
    </reaction>
</comment>
<comment type="cofactor">
    <cofactor evidence="1">
        <name>Mg(2+)</name>
        <dbReference type="ChEBI" id="CHEBI:18420"/>
    </cofactor>
    <text evidence="1">Binds 1 Mg(2+) ion per subunit. The magnesium is bound as Mg-PRPP.</text>
</comment>
<comment type="activity regulation">
    <text evidence="1">Allosterically activated by GTP.</text>
</comment>
<comment type="pathway">
    <text evidence="1">Pyrimidine metabolism; UMP biosynthesis via salvage pathway; UMP from uracil: step 1/1.</text>
</comment>
<comment type="similarity">
    <text evidence="1">Belongs to the UPRTase family.</text>
</comment>
<evidence type="ECO:0000255" key="1">
    <source>
        <dbReference type="HAMAP-Rule" id="MF_01218"/>
    </source>
</evidence>
<organism>
    <name type="scientific">Streptococcus uberis (strain ATCC BAA-854 / 0140J)</name>
    <dbReference type="NCBI Taxonomy" id="218495"/>
    <lineage>
        <taxon>Bacteria</taxon>
        <taxon>Bacillati</taxon>
        <taxon>Bacillota</taxon>
        <taxon>Bacilli</taxon>
        <taxon>Lactobacillales</taxon>
        <taxon>Streptococcaceae</taxon>
        <taxon>Streptococcus</taxon>
    </lineage>
</organism>
<dbReference type="EC" id="2.4.2.9" evidence="1"/>
<dbReference type="EMBL" id="AM946015">
    <property type="protein sequence ID" value="CAR41091.1"/>
    <property type="molecule type" value="Genomic_DNA"/>
</dbReference>
<dbReference type="RefSeq" id="WP_012657963.1">
    <property type="nucleotide sequence ID" value="NC_012004.1"/>
</dbReference>
<dbReference type="SMR" id="B9DTU7"/>
<dbReference type="STRING" id="218495.SUB0428"/>
<dbReference type="GeneID" id="93825730"/>
<dbReference type="KEGG" id="sub:SUB0428"/>
<dbReference type="eggNOG" id="COG0035">
    <property type="taxonomic scope" value="Bacteria"/>
</dbReference>
<dbReference type="HOGENOM" id="CLU_067096_2_2_9"/>
<dbReference type="OrthoDB" id="9781675at2"/>
<dbReference type="UniPathway" id="UPA00574">
    <property type="reaction ID" value="UER00636"/>
</dbReference>
<dbReference type="Proteomes" id="UP000000449">
    <property type="component" value="Chromosome"/>
</dbReference>
<dbReference type="GO" id="GO:0005525">
    <property type="term" value="F:GTP binding"/>
    <property type="evidence" value="ECO:0007669"/>
    <property type="project" value="UniProtKB-KW"/>
</dbReference>
<dbReference type="GO" id="GO:0000287">
    <property type="term" value="F:magnesium ion binding"/>
    <property type="evidence" value="ECO:0007669"/>
    <property type="project" value="UniProtKB-UniRule"/>
</dbReference>
<dbReference type="GO" id="GO:0004845">
    <property type="term" value="F:uracil phosphoribosyltransferase activity"/>
    <property type="evidence" value="ECO:0007669"/>
    <property type="project" value="UniProtKB-UniRule"/>
</dbReference>
<dbReference type="GO" id="GO:0044206">
    <property type="term" value="P:UMP salvage"/>
    <property type="evidence" value="ECO:0007669"/>
    <property type="project" value="UniProtKB-UniRule"/>
</dbReference>
<dbReference type="GO" id="GO:0006223">
    <property type="term" value="P:uracil salvage"/>
    <property type="evidence" value="ECO:0007669"/>
    <property type="project" value="InterPro"/>
</dbReference>
<dbReference type="CDD" id="cd06223">
    <property type="entry name" value="PRTases_typeI"/>
    <property type="match status" value="1"/>
</dbReference>
<dbReference type="FunFam" id="3.40.50.2020:FF:000003">
    <property type="entry name" value="Uracil phosphoribosyltransferase"/>
    <property type="match status" value="1"/>
</dbReference>
<dbReference type="Gene3D" id="3.40.50.2020">
    <property type="match status" value="1"/>
</dbReference>
<dbReference type="HAMAP" id="MF_01218_B">
    <property type="entry name" value="Upp_B"/>
    <property type="match status" value="1"/>
</dbReference>
<dbReference type="InterPro" id="IPR000836">
    <property type="entry name" value="PRibTrfase_dom"/>
</dbReference>
<dbReference type="InterPro" id="IPR029057">
    <property type="entry name" value="PRTase-like"/>
</dbReference>
<dbReference type="InterPro" id="IPR034332">
    <property type="entry name" value="Upp_B"/>
</dbReference>
<dbReference type="InterPro" id="IPR050054">
    <property type="entry name" value="UPRTase/APRTase"/>
</dbReference>
<dbReference type="InterPro" id="IPR005765">
    <property type="entry name" value="Ura_phspho_trans"/>
</dbReference>
<dbReference type="NCBIfam" id="NF001097">
    <property type="entry name" value="PRK00129.1"/>
    <property type="match status" value="1"/>
</dbReference>
<dbReference type="NCBIfam" id="TIGR01091">
    <property type="entry name" value="upp"/>
    <property type="match status" value="1"/>
</dbReference>
<dbReference type="PANTHER" id="PTHR32315">
    <property type="entry name" value="ADENINE PHOSPHORIBOSYLTRANSFERASE"/>
    <property type="match status" value="1"/>
</dbReference>
<dbReference type="PANTHER" id="PTHR32315:SF4">
    <property type="entry name" value="URACIL PHOSPHORIBOSYLTRANSFERASE, CHLOROPLASTIC"/>
    <property type="match status" value="1"/>
</dbReference>
<dbReference type="Pfam" id="PF14681">
    <property type="entry name" value="UPRTase"/>
    <property type="match status" value="1"/>
</dbReference>
<dbReference type="SUPFAM" id="SSF53271">
    <property type="entry name" value="PRTase-like"/>
    <property type="match status" value="1"/>
</dbReference>
<keyword id="KW-0021">Allosteric enzyme</keyword>
<keyword id="KW-0328">Glycosyltransferase</keyword>
<keyword id="KW-0342">GTP-binding</keyword>
<keyword id="KW-0460">Magnesium</keyword>
<keyword id="KW-0547">Nucleotide-binding</keyword>
<keyword id="KW-1185">Reference proteome</keyword>
<keyword id="KW-0808">Transferase</keyword>
<protein>
    <recommendedName>
        <fullName evidence="1">Uracil phosphoribosyltransferase</fullName>
        <ecNumber evidence="1">2.4.2.9</ecNumber>
    </recommendedName>
    <alternativeName>
        <fullName evidence="1">UMP pyrophosphorylase</fullName>
    </alternativeName>
    <alternativeName>
        <fullName evidence="1">UPRTase</fullName>
    </alternativeName>
</protein>
<gene>
    <name evidence="1" type="primary">upp</name>
    <name type="ordered locus">SUB0428</name>
</gene>
<proteinExistence type="inferred from homology"/>
<sequence length="209" mass="22897">MGKCQVISHPLIQHKLSILRREDTSTKNFRELVNEIAMLMGYEVSRDLPLEDVEIQTPVAKTIQKQLTGKKLAIVPILRAGIGMVDGFLSLVPAAKVGHIGMYRDEETLEPVEYLVKLPEDIDQRQIFVVDPMLATGGSAILAVDSLKKRGAGNIKFVCLVAAPEGVKKLQEAHPDVDIYTAALDEKLNEHGYIVPGLGDAGDRLFGTK</sequence>
<reference key="1">
    <citation type="journal article" date="2009" name="BMC Genomics">
        <title>Evidence for niche adaptation in the genome of the bovine pathogen Streptococcus uberis.</title>
        <authorList>
            <person name="Ward P.N."/>
            <person name="Holden M.T.G."/>
            <person name="Leigh J.A."/>
            <person name="Lennard N."/>
            <person name="Bignell A."/>
            <person name="Barron A."/>
            <person name="Clark L."/>
            <person name="Quail M.A."/>
            <person name="Woodward J."/>
            <person name="Barrell B.G."/>
            <person name="Egan S.A."/>
            <person name="Field T.R."/>
            <person name="Maskell D."/>
            <person name="Kehoe M."/>
            <person name="Dowson C.G."/>
            <person name="Chanter N."/>
            <person name="Whatmore A.M."/>
            <person name="Bentley S.D."/>
            <person name="Parkhill J."/>
        </authorList>
    </citation>
    <scope>NUCLEOTIDE SEQUENCE [LARGE SCALE GENOMIC DNA]</scope>
    <source>
        <strain>ATCC BAA-854 / 0140J</strain>
    </source>
</reference>
<feature type="chain" id="PRO_1000164837" description="Uracil phosphoribosyltransferase">
    <location>
        <begin position="1"/>
        <end position="209"/>
    </location>
</feature>
<feature type="binding site" evidence="1">
    <location>
        <position position="79"/>
    </location>
    <ligand>
        <name>5-phospho-alpha-D-ribose 1-diphosphate</name>
        <dbReference type="ChEBI" id="CHEBI:58017"/>
    </ligand>
</feature>
<feature type="binding site" evidence="1">
    <location>
        <position position="104"/>
    </location>
    <ligand>
        <name>5-phospho-alpha-D-ribose 1-diphosphate</name>
        <dbReference type="ChEBI" id="CHEBI:58017"/>
    </ligand>
</feature>
<feature type="binding site" evidence="1">
    <location>
        <begin position="131"/>
        <end position="139"/>
    </location>
    <ligand>
        <name>5-phospho-alpha-D-ribose 1-diphosphate</name>
        <dbReference type="ChEBI" id="CHEBI:58017"/>
    </ligand>
</feature>
<feature type="binding site" evidence="1">
    <location>
        <position position="194"/>
    </location>
    <ligand>
        <name>uracil</name>
        <dbReference type="ChEBI" id="CHEBI:17568"/>
    </ligand>
</feature>
<feature type="binding site" evidence="1">
    <location>
        <begin position="199"/>
        <end position="201"/>
    </location>
    <ligand>
        <name>uracil</name>
        <dbReference type="ChEBI" id="CHEBI:17568"/>
    </ligand>
</feature>
<feature type="binding site" evidence="1">
    <location>
        <position position="200"/>
    </location>
    <ligand>
        <name>5-phospho-alpha-D-ribose 1-diphosphate</name>
        <dbReference type="ChEBI" id="CHEBI:58017"/>
    </ligand>
</feature>